<name>RSMH_ACTP7</name>
<dbReference type="EC" id="2.1.1.199" evidence="1"/>
<dbReference type="EMBL" id="CP001091">
    <property type="protein sequence ID" value="ACE60662.1"/>
    <property type="molecule type" value="Genomic_DNA"/>
</dbReference>
<dbReference type="RefSeq" id="WP_005616490.1">
    <property type="nucleotide sequence ID" value="NC_010939.1"/>
</dbReference>
<dbReference type="SMR" id="B3GZK0"/>
<dbReference type="KEGG" id="apa:APP7_0010"/>
<dbReference type="HOGENOM" id="CLU_038422_2_0_6"/>
<dbReference type="Proteomes" id="UP000001226">
    <property type="component" value="Chromosome"/>
</dbReference>
<dbReference type="GO" id="GO:0005737">
    <property type="term" value="C:cytoplasm"/>
    <property type="evidence" value="ECO:0007669"/>
    <property type="project" value="UniProtKB-SubCell"/>
</dbReference>
<dbReference type="GO" id="GO:0071424">
    <property type="term" value="F:rRNA (cytosine-N4-)-methyltransferase activity"/>
    <property type="evidence" value="ECO:0007669"/>
    <property type="project" value="UniProtKB-UniRule"/>
</dbReference>
<dbReference type="GO" id="GO:0070475">
    <property type="term" value="P:rRNA base methylation"/>
    <property type="evidence" value="ECO:0007669"/>
    <property type="project" value="UniProtKB-UniRule"/>
</dbReference>
<dbReference type="FunFam" id="1.10.150.170:FF:000001">
    <property type="entry name" value="Ribosomal RNA small subunit methyltransferase H"/>
    <property type="match status" value="1"/>
</dbReference>
<dbReference type="Gene3D" id="1.10.150.170">
    <property type="entry name" value="Putative methyltransferase TM0872, insert domain"/>
    <property type="match status" value="1"/>
</dbReference>
<dbReference type="Gene3D" id="3.40.50.150">
    <property type="entry name" value="Vaccinia Virus protein VP39"/>
    <property type="match status" value="1"/>
</dbReference>
<dbReference type="HAMAP" id="MF_01007">
    <property type="entry name" value="16SrRNA_methyltr_H"/>
    <property type="match status" value="1"/>
</dbReference>
<dbReference type="InterPro" id="IPR002903">
    <property type="entry name" value="RsmH"/>
</dbReference>
<dbReference type="InterPro" id="IPR023397">
    <property type="entry name" value="SAM-dep_MeTrfase_MraW_recog"/>
</dbReference>
<dbReference type="InterPro" id="IPR029063">
    <property type="entry name" value="SAM-dependent_MTases_sf"/>
</dbReference>
<dbReference type="NCBIfam" id="TIGR00006">
    <property type="entry name" value="16S rRNA (cytosine(1402)-N(4))-methyltransferase RsmH"/>
    <property type="match status" value="1"/>
</dbReference>
<dbReference type="PANTHER" id="PTHR11265:SF0">
    <property type="entry name" value="12S RRNA N4-METHYLCYTIDINE METHYLTRANSFERASE"/>
    <property type="match status" value="1"/>
</dbReference>
<dbReference type="PANTHER" id="PTHR11265">
    <property type="entry name" value="S-ADENOSYL-METHYLTRANSFERASE MRAW"/>
    <property type="match status" value="1"/>
</dbReference>
<dbReference type="Pfam" id="PF01795">
    <property type="entry name" value="Methyltransf_5"/>
    <property type="match status" value="1"/>
</dbReference>
<dbReference type="PIRSF" id="PIRSF004486">
    <property type="entry name" value="MraW"/>
    <property type="match status" value="1"/>
</dbReference>
<dbReference type="SUPFAM" id="SSF81799">
    <property type="entry name" value="Putative methyltransferase TM0872, insert domain"/>
    <property type="match status" value="1"/>
</dbReference>
<dbReference type="SUPFAM" id="SSF53335">
    <property type="entry name" value="S-adenosyl-L-methionine-dependent methyltransferases"/>
    <property type="match status" value="1"/>
</dbReference>
<evidence type="ECO:0000255" key="1">
    <source>
        <dbReference type="HAMAP-Rule" id="MF_01007"/>
    </source>
</evidence>
<accession>B3GZK0</accession>
<proteinExistence type="inferred from homology"/>
<reference key="1">
    <citation type="submission" date="2008-06" db="EMBL/GenBank/DDBJ databases">
        <title>Genome and proteome analysis of A. pleuropneumoniae serotype 7.</title>
        <authorList>
            <person name="Linke B."/>
            <person name="Buettner F."/>
            <person name="Martinez-Arias R."/>
            <person name="Goesmann A."/>
            <person name="Baltes N."/>
            <person name="Tegetmeyer H."/>
            <person name="Singh M."/>
            <person name="Gerlach G.F."/>
        </authorList>
    </citation>
    <scope>NUCLEOTIDE SEQUENCE [LARGE SCALE GENOMIC DNA]</scope>
    <source>
        <strain>AP76</strain>
    </source>
</reference>
<feature type="chain" id="PRO_0000386696" description="Ribosomal RNA small subunit methyltransferase H">
    <location>
        <begin position="1"/>
        <end position="313"/>
    </location>
</feature>
<feature type="binding site" evidence="1">
    <location>
        <begin position="36"/>
        <end position="38"/>
    </location>
    <ligand>
        <name>S-adenosyl-L-methionine</name>
        <dbReference type="ChEBI" id="CHEBI:59789"/>
    </ligand>
</feature>
<feature type="binding site" evidence="1">
    <location>
        <position position="56"/>
    </location>
    <ligand>
        <name>S-adenosyl-L-methionine</name>
        <dbReference type="ChEBI" id="CHEBI:59789"/>
    </ligand>
</feature>
<feature type="binding site" evidence="1">
    <location>
        <position position="80"/>
    </location>
    <ligand>
        <name>S-adenosyl-L-methionine</name>
        <dbReference type="ChEBI" id="CHEBI:59789"/>
    </ligand>
</feature>
<feature type="binding site" evidence="1">
    <location>
        <position position="102"/>
    </location>
    <ligand>
        <name>S-adenosyl-L-methionine</name>
        <dbReference type="ChEBI" id="CHEBI:59789"/>
    </ligand>
</feature>
<feature type="binding site" evidence="1">
    <location>
        <position position="109"/>
    </location>
    <ligand>
        <name>S-adenosyl-L-methionine</name>
        <dbReference type="ChEBI" id="CHEBI:59789"/>
    </ligand>
</feature>
<organism>
    <name type="scientific">Actinobacillus pleuropneumoniae serotype 7 (strain AP76)</name>
    <dbReference type="NCBI Taxonomy" id="537457"/>
    <lineage>
        <taxon>Bacteria</taxon>
        <taxon>Pseudomonadati</taxon>
        <taxon>Pseudomonadota</taxon>
        <taxon>Gammaproteobacteria</taxon>
        <taxon>Pasteurellales</taxon>
        <taxon>Pasteurellaceae</taxon>
        <taxon>Actinobacillus</taxon>
    </lineage>
</organism>
<gene>
    <name evidence="1" type="primary">rsmH</name>
    <name type="synonym">mraW</name>
    <name type="ordered locus">APP7_0010</name>
</gene>
<keyword id="KW-0963">Cytoplasm</keyword>
<keyword id="KW-0489">Methyltransferase</keyword>
<keyword id="KW-0698">rRNA processing</keyword>
<keyword id="KW-0949">S-adenosyl-L-methionine</keyword>
<keyword id="KW-0808">Transferase</keyword>
<sequence>MNDTVHKHITVLLHEAVDGLAIKPSGIYIDGTFGRGGHSRLILSKLSEQGRLIATDRDPRAIAEANTIDDTRFQIVHTAFSAIPDVCEQLGLTGKIDGILLDLGVSSPQLDDAERGFSFMRDGPLDMRMDTTKGLSAAEWLAQVSADDLAWVLKTFGEERFAKRIAQAVVSYNKSATDKISRTLQLAQIIADAVPFKDKHKHPATRSFQAIRIFINSELDELEKALQSALSVLAPEGRLSIISFHSLEDRMVKQFMKKNSKGMDVPKGLPILESELNKNIPLKIIGKAIMPSEAEIEANPRSRSAVLRIAEKR</sequence>
<comment type="function">
    <text evidence="1">Specifically methylates the N4 position of cytidine in position 1402 (C1402) of 16S rRNA.</text>
</comment>
<comment type="catalytic activity">
    <reaction evidence="1">
        <text>cytidine(1402) in 16S rRNA + S-adenosyl-L-methionine = N(4)-methylcytidine(1402) in 16S rRNA + S-adenosyl-L-homocysteine + H(+)</text>
        <dbReference type="Rhea" id="RHEA:42928"/>
        <dbReference type="Rhea" id="RHEA-COMP:10286"/>
        <dbReference type="Rhea" id="RHEA-COMP:10287"/>
        <dbReference type="ChEBI" id="CHEBI:15378"/>
        <dbReference type="ChEBI" id="CHEBI:57856"/>
        <dbReference type="ChEBI" id="CHEBI:59789"/>
        <dbReference type="ChEBI" id="CHEBI:74506"/>
        <dbReference type="ChEBI" id="CHEBI:82748"/>
        <dbReference type="EC" id="2.1.1.199"/>
    </reaction>
</comment>
<comment type="subcellular location">
    <subcellularLocation>
        <location evidence="1">Cytoplasm</location>
    </subcellularLocation>
</comment>
<comment type="similarity">
    <text evidence="1">Belongs to the methyltransferase superfamily. RsmH family.</text>
</comment>
<protein>
    <recommendedName>
        <fullName evidence="1">Ribosomal RNA small subunit methyltransferase H</fullName>
        <ecNumber evidence="1">2.1.1.199</ecNumber>
    </recommendedName>
    <alternativeName>
        <fullName evidence="1">16S rRNA m(4)C1402 methyltransferase</fullName>
    </alternativeName>
    <alternativeName>
        <fullName evidence="1">rRNA (cytosine-N(4)-)-methyltransferase RsmH</fullName>
    </alternativeName>
</protein>